<feature type="chain" id="PRO_1000196381" description="Small ribosomal subunit protein bS16">
    <location>
        <begin position="1"/>
        <end position="82"/>
    </location>
</feature>
<gene>
    <name evidence="1" type="primary">rpsP</name>
    <name evidence="1" type="synonym">rps16</name>
    <name type="ordered locus">Cyan7425_2772</name>
</gene>
<dbReference type="EMBL" id="CP001344">
    <property type="protein sequence ID" value="ACL45118.1"/>
    <property type="molecule type" value="Genomic_DNA"/>
</dbReference>
<dbReference type="SMR" id="B8HKC7"/>
<dbReference type="STRING" id="395961.Cyan7425_2772"/>
<dbReference type="KEGG" id="cyn:Cyan7425_2772"/>
<dbReference type="eggNOG" id="COG0228">
    <property type="taxonomic scope" value="Bacteria"/>
</dbReference>
<dbReference type="HOGENOM" id="CLU_100590_5_2_3"/>
<dbReference type="OrthoDB" id="9807878at2"/>
<dbReference type="GO" id="GO:0005737">
    <property type="term" value="C:cytoplasm"/>
    <property type="evidence" value="ECO:0007669"/>
    <property type="project" value="UniProtKB-ARBA"/>
</dbReference>
<dbReference type="GO" id="GO:0015935">
    <property type="term" value="C:small ribosomal subunit"/>
    <property type="evidence" value="ECO:0007669"/>
    <property type="project" value="TreeGrafter"/>
</dbReference>
<dbReference type="GO" id="GO:0003735">
    <property type="term" value="F:structural constituent of ribosome"/>
    <property type="evidence" value="ECO:0007669"/>
    <property type="project" value="InterPro"/>
</dbReference>
<dbReference type="GO" id="GO:0006412">
    <property type="term" value="P:translation"/>
    <property type="evidence" value="ECO:0007669"/>
    <property type="project" value="UniProtKB-UniRule"/>
</dbReference>
<dbReference type="Gene3D" id="3.30.1320.10">
    <property type="match status" value="1"/>
</dbReference>
<dbReference type="HAMAP" id="MF_00385">
    <property type="entry name" value="Ribosomal_bS16"/>
    <property type="match status" value="1"/>
</dbReference>
<dbReference type="InterPro" id="IPR000307">
    <property type="entry name" value="Ribosomal_bS16"/>
</dbReference>
<dbReference type="InterPro" id="IPR020592">
    <property type="entry name" value="Ribosomal_bS16_CS"/>
</dbReference>
<dbReference type="InterPro" id="IPR023803">
    <property type="entry name" value="Ribosomal_bS16_dom_sf"/>
</dbReference>
<dbReference type="NCBIfam" id="TIGR00002">
    <property type="entry name" value="S16"/>
    <property type="match status" value="1"/>
</dbReference>
<dbReference type="PANTHER" id="PTHR12919">
    <property type="entry name" value="30S RIBOSOMAL PROTEIN S16"/>
    <property type="match status" value="1"/>
</dbReference>
<dbReference type="PANTHER" id="PTHR12919:SF20">
    <property type="entry name" value="SMALL RIBOSOMAL SUBUNIT PROTEIN BS16M"/>
    <property type="match status" value="1"/>
</dbReference>
<dbReference type="Pfam" id="PF00886">
    <property type="entry name" value="Ribosomal_S16"/>
    <property type="match status" value="1"/>
</dbReference>
<dbReference type="SUPFAM" id="SSF54565">
    <property type="entry name" value="Ribosomal protein S16"/>
    <property type="match status" value="1"/>
</dbReference>
<dbReference type="PROSITE" id="PS00732">
    <property type="entry name" value="RIBOSOMAL_S16"/>
    <property type="match status" value="1"/>
</dbReference>
<sequence>MIKLRLKRFGKKRAASYRIVAMNSRDRRDGRPLEELGYYNPMTDETNLRVEPLVKRLKEGAQPTDTVRRILEKANIFEQVRA</sequence>
<keyword id="KW-0687">Ribonucleoprotein</keyword>
<keyword id="KW-0689">Ribosomal protein</keyword>
<comment type="similarity">
    <text evidence="1">Belongs to the bacterial ribosomal protein bS16 family.</text>
</comment>
<proteinExistence type="inferred from homology"/>
<name>RS16_CYAP4</name>
<accession>B8HKC7</accession>
<reference key="1">
    <citation type="journal article" date="2011" name="MBio">
        <title>Novel metabolic attributes of the genus Cyanothece, comprising a group of unicellular nitrogen-fixing Cyanobacteria.</title>
        <authorList>
            <person name="Bandyopadhyay A."/>
            <person name="Elvitigala T."/>
            <person name="Welsh E."/>
            <person name="Stockel J."/>
            <person name="Liberton M."/>
            <person name="Min H."/>
            <person name="Sherman L.A."/>
            <person name="Pakrasi H.B."/>
        </authorList>
    </citation>
    <scope>NUCLEOTIDE SEQUENCE [LARGE SCALE GENOMIC DNA]</scope>
    <source>
        <strain>PCC 7425 / ATCC 29141</strain>
    </source>
</reference>
<evidence type="ECO:0000255" key="1">
    <source>
        <dbReference type="HAMAP-Rule" id="MF_00385"/>
    </source>
</evidence>
<evidence type="ECO:0000305" key="2"/>
<organism>
    <name type="scientific">Cyanothece sp. (strain PCC 7425 / ATCC 29141)</name>
    <dbReference type="NCBI Taxonomy" id="395961"/>
    <lineage>
        <taxon>Bacteria</taxon>
        <taxon>Bacillati</taxon>
        <taxon>Cyanobacteriota</taxon>
        <taxon>Cyanophyceae</taxon>
        <taxon>Gomontiellales</taxon>
        <taxon>Cyanothecaceae</taxon>
        <taxon>Cyanothece</taxon>
    </lineage>
</organism>
<protein>
    <recommendedName>
        <fullName evidence="1">Small ribosomal subunit protein bS16</fullName>
    </recommendedName>
    <alternativeName>
        <fullName evidence="2">30S ribosomal protein S16</fullName>
    </alternativeName>
</protein>